<evidence type="ECO:0000255" key="1">
    <source>
        <dbReference type="HAMAP-Rule" id="MF_01314"/>
    </source>
</evidence>
<reference key="1">
    <citation type="journal article" date="2011" name="J. Bacteriol.">
        <title>Comparative genomics of 28 Salmonella enterica isolates: evidence for CRISPR-mediated adaptive sublineage evolution.</title>
        <authorList>
            <person name="Fricke W.F."/>
            <person name="Mammel M.K."/>
            <person name="McDermott P.F."/>
            <person name="Tartera C."/>
            <person name="White D.G."/>
            <person name="Leclerc J.E."/>
            <person name="Ravel J."/>
            <person name="Cebula T.A."/>
        </authorList>
    </citation>
    <scope>NUCLEOTIDE SEQUENCE [LARGE SCALE GENOMIC DNA]</scope>
    <source>
        <strain>SL254</strain>
    </source>
</reference>
<organism>
    <name type="scientific">Salmonella newport (strain SL254)</name>
    <dbReference type="NCBI Taxonomy" id="423368"/>
    <lineage>
        <taxon>Bacteria</taxon>
        <taxon>Pseudomonadati</taxon>
        <taxon>Pseudomonadota</taxon>
        <taxon>Gammaproteobacteria</taxon>
        <taxon>Enterobacterales</taxon>
        <taxon>Enterobacteriaceae</taxon>
        <taxon>Salmonella</taxon>
    </lineage>
</organism>
<feature type="chain" id="PRO_1000141201" description="Anaerobic nitric oxide reductase transcription regulator NorR">
    <location>
        <begin position="1"/>
        <end position="506"/>
    </location>
</feature>
<feature type="domain" description="Sigma-54 factor interaction" evidence="1">
    <location>
        <begin position="187"/>
        <end position="416"/>
    </location>
</feature>
<feature type="DNA-binding region" description="H-T-H motif" evidence="1">
    <location>
        <begin position="481"/>
        <end position="500"/>
    </location>
</feature>
<feature type="binding site" evidence="1">
    <location>
        <begin position="215"/>
        <end position="222"/>
    </location>
    <ligand>
        <name>ATP</name>
        <dbReference type="ChEBI" id="CHEBI:30616"/>
    </ligand>
</feature>
<feature type="binding site" evidence="1">
    <location>
        <begin position="278"/>
        <end position="287"/>
    </location>
    <ligand>
        <name>ATP</name>
        <dbReference type="ChEBI" id="CHEBI:30616"/>
    </ligand>
</feature>
<feature type="modified residue" description="4-aspartylphosphate" evidence="1">
    <location>
        <position position="57"/>
    </location>
</feature>
<gene>
    <name evidence="1" type="primary">norR</name>
    <name type="ordered locus">SNSL254_A3041</name>
</gene>
<proteinExistence type="inferred from homology"/>
<accession>B4T3B0</accession>
<comment type="function">
    <text evidence="1">Required for the expression of anaerobic nitric oxide (NO) reductase, acts as a transcriptional activator for at least the norVW operon. Activation also requires sigma-54.</text>
</comment>
<comment type="pathway">
    <text evidence="1">Nitrogen metabolism; nitric oxide reduction.</text>
</comment>
<protein>
    <recommendedName>
        <fullName evidence="1">Anaerobic nitric oxide reductase transcription regulator NorR</fullName>
    </recommendedName>
</protein>
<dbReference type="EMBL" id="CP001113">
    <property type="protein sequence ID" value="ACF64785.1"/>
    <property type="molecule type" value="Genomic_DNA"/>
</dbReference>
<dbReference type="RefSeq" id="WP_000010802.1">
    <property type="nucleotide sequence ID" value="NZ_CCMR01000001.1"/>
</dbReference>
<dbReference type="SMR" id="B4T3B0"/>
<dbReference type="KEGG" id="see:SNSL254_A3041"/>
<dbReference type="HOGENOM" id="CLU_000445_125_2_6"/>
<dbReference type="UniPathway" id="UPA00638"/>
<dbReference type="Proteomes" id="UP000008824">
    <property type="component" value="Chromosome"/>
</dbReference>
<dbReference type="GO" id="GO:0005524">
    <property type="term" value="F:ATP binding"/>
    <property type="evidence" value="ECO:0007669"/>
    <property type="project" value="UniProtKB-UniRule"/>
</dbReference>
<dbReference type="GO" id="GO:0016887">
    <property type="term" value="F:ATP hydrolysis activity"/>
    <property type="evidence" value="ECO:0007669"/>
    <property type="project" value="InterPro"/>
</dbReference>
<dbReference type="GO" id="GO:0003677">
    <property type="term" value="F:DNA binding"/>
    <property type="evidence" value="ECO:0007669"/>
    <property type="project" value="UniProtKB-KW"/>
</dbReference>
<dbReference type="GO" id="GO:0003700">
    <property type="term" value="F:DNA-binding transcription factor activity"/>
    <property type="evidence" value="ECO:0007669"/>
    <property type="project" value="UniProtKB-UniRule"/>
</dbReference>
<dbReference type="GO" id="GO:0000160">
    <property type="term" value="P:phosphorelay signal transduction system"/>
    <property type="evidence" value="ECO:0007669"/>
    <property type="project" value="UniProtKB-UniRule"/>
</dbReference>
<dbReference type="CDD" id="cd00009">
    <property type="entry name" value="AAA"/>
    <property type="match status" value="1"/>
</dbReference>
<dbReference type="FunFam" id="1.10.8.60:FF:000045">
    <property type="entry name" value="Anaerobic nitric oxide reductase transcription regulator NorR"/>
    <property type="match status" value="1"/>
</dbReference>
<dbReference type="FunFam" id="3.30.450.40:FF:000021">
    <property type="entry name" value="Anaerobic nitric oxide reductase transcription regulator NorR"/>
    <property type="match status" value="1"/>
</dbReference>
<dbReference type="FunFam" id="3.40.50.300:FF:000006">
    <property type="entry name" value="DNA-binding transcriptional regulator NtrC"/>
    <property type="match status" value="1"/>
</dbReference>
<dbReference type="Gene3D" id="1.10.8.60">
    <property type="match status" value="1"/>
</dbReference>
<dbReference type="Gene3D" id="3.30.450.40">
    <property type="match status" value="1"/>
</dbReference>
<dbReference type="Gene3D" id="1.10.10.60">
    <property type="entry name" value="Homeodomain-like"/>
    <property type="match status" value="1"/>
</dbReference>
<dbReference type="Gene3D" id="3.40.50.300">
    <property type="entry name" value="P-loop containing nucleotide triphosphate hydrolases"/>
    <property type="match status" value="1"/>
</dbReference>
<dbReference type="HAMAP" id="MF_01314">
    <property type="entry name" value="NorR"/>
    <property type="match status" value="1"/>
</dbReference>
<dbReference type="InterPro" id="IPR003593">
    <property type="entry name" value="AAA+_ATPase"/>
</dbReference>
<dbReference type="InterPro" id="IPR003018">
    <property type="entry name" value="GAF"/>
</dbReference>
<dbReference type="InterPro" id="IPR029016">
    <property type="entry name" value="GAF-like_dom_sf"/>
</dbReference>
<dbReference type="InterPro" id="IPR009057">
    <property type="entry name" value="Homeodomain-like_sf"/>
</dbReference>
<dbReference type="InterPro" id="IPR023944">
    <property type="entry name" value="NorR"/>
</dbReference>
<dbReference type="InterPro" id="IPR027417">
    <property type="entry name" value="P-loop_NTPase"/>
</dbReference>
<dbReference type="InterPro" id="IPR002078">
    <property type="entry name" value="Sigma_54_int"/>
</dbReference>
<dbReference type="InterPro" id="IPR025662">
    <property type="entry name" value="Sigma_54_int_dom_ATP-bd_1"/>
</dbReference>
<dbReference type="InterPro" id="IPR025943">
    <property type="entry name" value="Sigma_54_int_dom_ATP-bd_2"/>
</dbReference>
<dbReference type="InterPro" id="IPR025944">
    <property type="entry name" value="Sigma_54_int_dom_CS"/>
</dbReference>
<dbReference type="NCBIfam" id="NF003451">
    <property type="entry name" value="PRK05022.1"/>
    <property type="match status" value="1"/>
</dbReference>
<dbReference type="PANTHER" id="PTHR32071:SF35">
    <property type="entry name" value="ANAEROBIC NITRIC OXIDE REDUCTASE TRANSCRIPTION REGULATOR NORR"/>
    <property type="match status" value="1"/>
</dbReference>
<dbReference type="PANTHER" id="PTHR32071">
    <property type="entry name" value="TRANSCRIPTIONAL REGULATORY PROTEIN"/>
    <property type="match status" value="1"/>
</dbReference>
<dbReference type="Pfam" id="PF01590">
    <property type="entry name" value="GAF"/>
    <property type="match status" value="1"/>
</dbReference>
<dbReference type="Pfam" id="PF00158">
    <property type="entry name" value="Sigma54_activat"/>
    <property type="match status" value="1"/>
</dbReference>
<dbReference type="SMART" id="SM00382">
    <property type="entry name" value="AAA"/>
    <property type="match status" value="1"/>
</dbReference>
<dbReference type="SMART" id="SM00065">
    <property type="entry name" value="GAF"/>
    <property type="match status" value="1"/>
</dbReference>
<dbReference type="SUPFAM" id="SSF55781">
    <property type="entry name" value="GAF domain-like"/>
    <property type="match status" value="1"/>
</dbReference>
<dbReference type="SUPFAM" id="SSF46689">
    <property type="entry name" value="Homeodomain-like"/>
    <property type="match status" value="1"/>
</dbReference>
<dbReference type="SUPFAM" id="SSF52540">
    <property type="entry name" value="P-loop containing nucleoside triphosphate hydrolases"/>
    <property type="match status" value="1"/>
</dbReference>
<dbReference type="PROSITE" id="PS00675">
    <property type="entry name" value="SIGMA54_INTERACT_1"/>
    <property type="match status" value="1"/>
</dbReference>
<dbReference type="PROSITE" id="PS00676">
    <property type="entry name" value="SIGMA54_INTERACT_2"/>
    <property type="match status" value="1"/>
</dbReference>
<dbReference type="PROSITE" id="PS00688">
    <property type="entry name" value="SIGMA54_INTERACT_3"/>
    <property type="match status" value="1"/>
</dbReference>
<dbReference type="PROSITE" id="PS50045">
    <property type="entry name" value="SIGMA54_INTERACT_4"/>
    <property type="match status" value="1"/>
</dbReference>
<sequence>MSFSVEVLAGIAIELQRGIGHQDRFQRLITTLRQVLACDASALLRYESRQFIPLAIDGLAQDVLGRRFTLEGHPRLEAIARAGDVVRFPADSDLPDPYDGLIPGQESLKVHACVGLPLFAGQNLIGALTLDAMTPEQFEVFSDEELRLVAALAAGALSNALLIEQLESQNILPGSSGVFEPIKETHMIGLSPAMTQLKKEIEIVAGSDLNVLIGGETGTGKELVAKAIHQGSPRAVNPLVYLNCAALPESVAESELFGHVKGAFTGAISNRSGKFEMADNGTLFLDEIGELSLALQAKLLRVLQYGDIQRVGDDRSLRVDVRVLAATNRDLREEVLAGRFRADLFHRLSVFPLFVPPLRERGDDVVLLAGYFCEQCRLRLGLSRVVLSTGARRHLLNYGWPGNVRELEHAIHRAVVLARATRAGDEVILEAQHFALSEDVLPAPPAESFLALPTCRNLRESTENFQREMIRQALAQNNHNWAASARALETDVANLHRLAKRLGLKD</sequence>
<keyword id="KW-0067">ATP-binding</keyword>
<keyword id="KW-0238">DNA-binding</keyword>
<keyword id="KW-0547">Nucleotide-binding</keyword>
<keyword id="KW-0597">Phosphoprotein</keyword>
<keyword id="KW-0804">Transcription</keyword>
<keyword id="KW-0805">Transcription regulation</keyword>
<name>NORR_SALNS</name>